<keyword id="KW-0067">ATP-binding</keyword>
<keyword id="KW-0963">Cytoplasm</keyword>
<keyword id="KW-0227">DNA damage</keyword>
<keyword id="KW-0233">DNA recombination</keyword>
<keyword id="KW-0234">DNA repair</keyword>
<keyword id="KW-0238">DNA-binding</keyword>
<keyword id="KW-0378">Hydrolase</keyword>
<keyword id="KW-0547">Nucleotide-binding</keyword>
<keyword id="KW-1185">Reference proteome</keyword>
<name>RUVB_PHEZH</name>
<gene>
    <name evidence="1" type="primary">ruvB</name>
    <name type="ordered locus">PHZ_c3087</name>
</gene>
<reference key="1">
    <citation type="journal article" date="2008" name="BMC Genomics">
        <title>Complete genome of Phenylobacterium zucineum - a novel facultative intracellular bacterium isolated from human erythroleukemia cell line K562.</title>
        <authorList>
            <person name="Luo Y."/>
            <person name="Xu X."/>
            <person name="Ding Z."/>
            <person name="Liu Z."/>
            <person name="Zhang B."/>
            <person name="Yan Z."/>
            <person name="Sun J."/>
            <person name="Hu S."/>
            <person name="Hu X."/>
        </authorList>
    </citation>
    <scope>NUCLEOTIDE SEQUENCE [LARGE SCALE GENOMIC DNA]</scope>
    <source>
        <strain>HLK1</strain>
    </source>
</reference>
<proteinExistence type="inferred from homology"/>
<accession>B4R9Z2</accession>
<feature type="chain" id="PRO_1000089662" description="Holliday junction branch migration complex subunit RuvB">
    <location>
        <begin position="1"/>
        <end position="344"/>
    </location>
</feature>
<feature type="region of interest" description="Large ATPase domain (RuvB-L)" evidence="1">
    <location>
        <begin position="1"/>
        <end position="180"/>
    </location>
</feature>
<feature type="region of interest" description="Small ATPAse domain (RuvB-S)" evidence="1">
    <location>
        <begin position="181"/>
        <end position="251"/>
    </location>
</feature>
<feature type="region of interest" description="Head domain (RuvB-H)" evidence="1">
    <location>
        <begin position="254"/>
        <end position="344"/>
    </location>
</feature>
<feature type="binding site" evidence="1">
    <location>
        <position position="19"/>
    </location>
    <ligand>
        <name>ATP</name>
        <dbReference type="ChEBI" id="CHEBI:30616"/>
    </ligand>
</feature>
<feature type="binding site" evidence="1">
    <location>
        <position position="20"/>
    </location>
    <ligand>
        <name>ATP</name>
        <dbReference type="ChEBI" id="CHEBI:30616"/>
    </ligand>
</feature>
<feature type="binding site" evidence="1">
    <location>
        <position position="61"/>
    </location>
    <ligand>
        <name>ATP</name>
        <dbReference type="ChEBI" id="CHEBI:30616"/>
    </ligand>
</feature>
<feature type="binding site" evidence="1">
    <location>
        <position position="64"/>
    </location>
    <ligand>
        <name>ATP</name>
        <dbReference type="ChEBI" id="CHEBI:30616"/>
    </ligand>
</feature>
<feature type="binding site" evidence="1">
    <location>
        <position position="65"/>
    </location>
    <ligand>
        <name>ATP</name>
        <dbReference type="ChEBI" id="CHEBI:30616"/>
    </ligand>
</feature>
<feature type="binding site" evidence="1">
    <location>
        <position position="65"/>
    </location>
    <ligand>
        <name>Mg(2+)</name>
        <dbReference type="ChEBI" id="CHEBI:18420"/>
    </ligand>
</feature>
<feature type="binding site" evidence="1">
    <location>
        <position position="66"/>
    </location>
    <ligand>
        <name>ATP</name>
        <dbReference type="ChEBI" id="CHEBI:30616"/>
    </ligand>
</feature>
<feature type="binding site" evidence="1">
    <location>
        <position position="170"/>
    </location>
    <ligand>
        <name>ATP</name>
        <dbReference type="ChEBI" id="CHEBI:30616"/>
    </ligand>
</feature>
<feature type="binding site" evidence="1">
    <location>
        <position position="180"/>
    </location>
    <ligand>
        <name>ATP</name>
        <dbReference type="ChEBI" id="CHEBI:30616"/>
    </ligand>
</feature>
<feature type="binding site" evidence="1">
    <location>
        <position position="217"/>
    </location>
    <ligand>
        <name>ATP</name>
        <dbReference type="ChEBI" id="CHEBI:30616"/>
    </ligand>
</feature>
<feature type="binding site" evidence="1">
    <location>
        <position position="290"/>
    </location>
    <ligand>
        <name>DNA</name>
        <dbReference type="ChEBI" id="CHEBI:16991"/>
    </ligand>
</feature>
<feature type="binding site" evidence="1">
    <location>
        <position position="309"/>
    </location>
    <ligand>
        <name>DNA</name>
        <dbReference type="ChEBI" id="CHEBI:16991"/>
    </ligand>
</feature>
<feature type="binding site" evidence="1">
    <location>
        <position position="314"/>
    </location>
    <ligand>
        <name>DNA</name>
        <dbReference type="ChEBI" id="CHEBI:16991"/>
    </ligand>
</feature>
<sequence>MSRIVSGEAQPFEPADRALRPQTLSEFVGQEQAKANLSVFIDAARGRGEALDHVLLFGPPGLGKTTLAQILARELGVNFRATSGPVLAKAGDLAAILTNLEPRDVLFIDEIHRLAANVEEILYPAMEDHVLDLVIGEGPSARSVRIDLAPFTLVAATTRAGLLATPLRDRFGIPVRLEFYTHDELARVLLGAAAKMGAPLDPSGAREIAARARGTPRVAGRLLRRVRDFAAADGAEVIDRKAAAAALARLDVDEVGLDALDRRYLRALIENYAGGPAGVETLAYAIAEARDAVEDVIEPFLLQQGFIQRTPRGRMACAKAYEHLGLQAPRNLGGAAPPADLFDK</sequence>
<evidence type="ECO:0000255" key="1">
    <source>
        <dbReference type="HAMAP-Rule" id="MF_00016"/>
    </source>
</evidence>
<organism>
    <name type="scientific">Phenylobacterium zucineum (strain HLK1)</name>
    <dbReference type="NCBI Taxonomy" id="450851"/>
    <lineage>
        <taxon>Bacteria</taxon>
        <taxon>Pseudomonadati</taxon>
        <taxon>Pseudomonadota</taxon>
        <taxon>Alphaproteobacteria</taxon>
        <taxon>Caulobacterales</taxon>
        <taxon>Caulobacteraceae</taxon>
        <taxon>Phenylobacterium</taxon>
    </lineage>
</organism>
<comment type="function">
    <text evidence="1">The RuvA-RuvB-RuvC complex processes Holliday junction (HJ) DNA during genetic recombination and DNA repair, while the RuvA-RuvB complex plays an important role in the rescue of blocked DNA replication forks via replication fork reversal (RFR). RuvA specifically binds to HJ cruciform DNA, conferring on it an open structure. The RuvB hexamer acts as an ATP-dependent pump, pulling dsDNA into and through the RuvAB complex. RuvB forms 2 homohexamers on either side of HJ DNA bound by 1 or 2 RuvA tetramers; 4 subunits per hexamer contact DNA at a time. Coordinated motions by a converter formed by DNA-disengaged RuvB subunits stimulates ATP hydrolysis and nucleotide exchange. Immobilization of the converter enables RuvB to convert the ATP-contained energy into a lever motion, pulling 2 nucleotides of DNA out of the RuvA tetramer per ATP hydrolyzed, thus driving DNA branch migration. The RuvB motors rotate together with the DNA substrate, which together with the progressing nucleotide cycle form the mechanistic basis for DNA recombination by continuous HJ branch migration. Branch migration allows RuvC to scan DNA until it finds its consensus sequence, where it cleaves and resolves cruciform DNA.</text>
</comment>
<comment type="catalytic activity">
    <reaction evidence="1">
        <text>ATP + H2O = ADP + phosphate + H(+)</text>
        <dbReference type="Rhea" id="RHEA:13065"/>
        <dbReference type="ChEBI" id="CHEBI:15377"/>
        <dbReference type="ChEBI" id="CHEBI:15378"/>
        <dbReference type="ChEBI" id="CHEBI:30616"/>
        <dbReference type="ChEBI" id="CHEBI:43474"/>
        <dbReference type="ChEBI" id="CHEBI:456216"/>
    </reaction>
</comment>
<comment type="subunit">
    <text evidence="1">Homohexamer. Forms an RuvA(8)-RuvB(12)-Holliday junction (HJ) complex. HJ DNA is sandwiched between 2 RuvA tetramers; dsDNA enters through RuvA and exits via RuvB. An RuvB hexamer assembles on each DNA strand where it exits the tetramer. Each RuvB hexamer is contacted by two RuvA subunits (via domain III) on 2 adjacent RuvB subunits; this complex drives branch migration. In the full resolvosome a probable DNA-RuvA(4)-RuvB(12)-RuvC(2) complex forms which resolves the HJ.</text>
</comment>
<comment type="subcellular location">
    <subcellularLocation>
        <location evidence="1">Cytoplasm</location>
    </subcellularLocation>
</comment>
<comment type="domain">
    <text evidence="1">Has 3 domains, the large (RuvB-L) and small ATPase (RuvB-S) domains and the C-terminal head (RuvB-H) domain. The head domain binds DNA, while the ATPase domains jointly bind ATP, ADP or are empty depending on the state of the subunit in the translocation cycle. During a single DNA translocation step the structure of each domain remains the same, but their relative positions change.</text>
</comment>
<comment type="similarity">
    <text evidence="1">Belongs to the RuvB family.</text>
</comment>
<dbReference type="EC" id="3.6.4.-" evidence="1"/>
<dbReference type="EMBL" id="CP000747">
    <property type="protein sequence ID" value="ACG79496.1"/>
    <property type="molecule type" value="Genomic_DNA"/>
</dbReference>
<dbReference type="RefSeq" id="WP_012523634.1">
    <property type="nucleotide sequence ID" value="NC_011144.1"/>
</dbReference>
<dbReference type="SMR" id="B4R9Z2"/>
<dbReference type="STRING" id="450851.PHZ_c3087"/>
<dbReference type="KEGG" id="pzu:PHZ_c3087"/>
<dbReference type="eggNOG" id="COG2255">
    <property type="taxonomic scope" value="Bacteria"/>
</dbReference>
<dbReference type="HOGENOM" id="CLU_055599_1_0_5"/>
<dbReference type="OrthoDB" id="9804478at2"/>
<dbReference type="Proteomes" id="UP000001868">
    <property type="component" value="Chromosome"/>
</dbReference>
<dbReference type="GO" id="GO:0005737">
    <property type="term" value="C:cytoplasm"/>
    <property type="evidence" value="ECO:0007669"/>
    <property type="project" value="UniProtKB-SubCell"/>
</dbReference>
<dbReference type="GO" id="GO:0048476">
    <property type="term" value="C:Holliday junction resolvase complex"/>
    <property type="evidence" value="ECO:0007669"/>
    <property type="project" value="UniProtKB-UniRule"/>
</dbReference>
<dbReference type="GO" id="GO:0005524">
    <property type="term" value="F:ATP binding"/>
    <property type="evidence" value="ECO:0007669"/>
    <property type="project" value="UniProtKB-UniRule"/>
</dbReference>
<dbReference type="GO" id="GO:0016887">
    <property type="term" value="F:ATP hydrolysis activity"/>
    <property type="evidence" value="ECO:0007669"/>
    <property type="project" value="InterPro"/>
</dbReference>
<dbReference type="GO" id="GO:0000400">
    <property type="term" value="F:four-way junction DNA binding"/>
    <property type="evidence" value="ECO:0007669"/>
    <property type="project" value="UniProtKB-UniRule"/>
</dbReference>
<dbReference type="GO" id="GO:0009378">
    <property type="term" value="F:four-way junction helicase activity"/>
    <property type="evidence" value="ECO:0007669"/>
    <property type="project" value="InterPro"/>
</dbReference>
<dbReference type="GO" id="GO:0006310">
    <property type="term" value="P:DNA recombination"/>
    <property type="evidence" value="ECO:0007669"/>
    <property type="project" value="UniProtKB-UniRule"/>
</dbReference>
<dbReference type="GO" id="GO:0006281">
    <property type="term" value="P:DNA repair"/>
    <property type="evidence" value="ECO:0007669"/>
    <property type="project" value="UniProtKB-UniRule"/>
</dbReference>
<dbReference type="CDD" id="cd00009">
    <property type="entry name" value="AAA"/>
    <property type="match status" value="1"/>
</dbReference>
<dbReference type="Gene3D" id="1.10.8.60">
    <property type="match status" value="1"/>
</dbReference>
<dbReference type="Gene3D" id="3.40.50.300">
    <property type="entry name" value="P-loop containing nucleotide triphosphate hydrolases"/>
    <property type="match status" value="1"/>
</dbReference>
<dbReference type="Gene3D" id="1.10.10.10">
    <property type="entry name" value="Winged helix-like DNA-binding domain superfamily/Winged helix DNA-binding domain"/>
    <property type="match status" value="1"/>
</dbReference>
<dbReference type="HAMAP" id="MF_00016">
    <property type="entry name" value="DNA_HJ_migration_RuvB"/>
    <property type="match status" value="1"/>
</dbReference>
<dbReference type="InterPro" id="IPR003593">
    <property type="entry name" value="AAA+_ATPase"/>
</dbReference>
<dbReference type="InterPro" id="IPR041445">
    <property type="entry name" value="AAA_lid_4"/>
</dbReference>
<dbReference type="InterPro" id="IPR004605">
    <property type="entry name" value="DNA_helicase_Holl-junc_RuvB"/>
</dbReference>
<dbReference type="InterPro" id="IPR027417">
    <property type="entry name" value="P-loop_NTPase"/>
</dbReference>
<dbReference type="InterPro" id="IPR008824">
    <property type="entry name" value="RuvB-like_N"/>
</dbReference>
<dbReference type="InterPro" id="IPR008823">
    <property type="entry name" value="RuvB_C"/>
</dbReference>
<dbReference type="InterPro" id="IPR036388">
    <property type="entry name" value="WH-like_DNA-bd_sf"/>
</dbReference>
<dbReference type="InterPro" id="IPR036390">
    <property type="entry name" value="WH_DNA-bd_sf"/>
</dbReference>
<dbReference type="NCBIfam" id="NF000868">
    <property type="entry name" value="PRK00080.1"/>
    <property type="match status" value="1"/>
</dbReference>
<dbReference type="NCBIfam" id="TIGR00635">
    <property type="entry name" value="ruvB"/>
    <property type="match status" value="1"/>
</dbReference>
<dbReference type="PANTHER" id="PTHR42848">
    <property type="match status" value="1"/>
</dbReference>
<dbReference type="PANTHER" id="PTHR42848:SF1">
    <property type="entry name" value="HOLLIDAY JUNCTION BRANCH MIGRATION COMPLEX SUBUNIT RUVB"/>
    <property type="match status" value="1"/>
</dbReference>
<dbReference type="Pfam" id="PF17864">
    <property type="entry name" value="AAA_lid_4"/>
    <property type="match status" value="1"/>
</dbReference>
<dbReference type="Pfam" id="PF05491">
    <property type="entry name" value="RuvB_C"/>
    <property type="match status" value="1"/>
</dbReference>
<dbReference type="Pfam" id="PF05496">
    <property type="entry name" value="RuvB_N"/>
    <property type="match status" value="1"/>
</dbReference>
<dbReference type="SMART" id="SM00382">
    <property type="entry name" value="AAA"/>
    <property type="match status" value="1"/>
</dbReference>
<dbReference type="SUPFAM" id="SSF52540">
    <property type="entry name" value="P-loop containing nucleoside triphosphate hydrolases"/>
    <property type="match status" value="1"/>
</dbReference>
<dbReference type="SUPFAM" id="SSF46785">
    <property type="entry name" value="Winged helix' DNA-binding domain"/>
    <property type="match status" value="1"/>
</dbReference>
<protein>
    <recommendedName>
        <fullName evidence="1">Holliday junction branch migration complex subunit RuvB</fullName>
        <ecNumber evidence="1">3.6.4.-</ecNumber>
    </recommendedName>
</protein>